<comment type="function">
    <text evidence="1">This protein binds specifically to 23S rRNA; its binding is stimulated by other ribosomal proteins, e.g. L4, L17, and L20. It is important during the early stages of 50S assembly. It makes multiple contacts with different domains of the 23S rRNA in the assembled 50S subunit and ribosome (By similarity).</text>
</comment>
<comment type="function">
    <text evidence="1">The globular domain of the protein is located near the polypeptide exit tunnel on the outside of the subunit, while an extended beta-hairpin is found that lines the wall of the exit tunnel in the center of the 70S ribosome.</text>
</comment>
<comment type="subunit">
    <text evidence="1">Part of the 50S ribosomal subunit.</text>
</comment>
<comment type="similarity">
    <text evidence="1">Belongs to the universal ribosomal protein uL22 family.</text>
</comment>
<sequence length="115" mass="12542">MAEQVTSAKATAKTVRIPARKARLVIDLIRGKSVAEAFGILKFTPRSGAYLIEKVLKSAVANAENNFDLDVEDLYVSEAFVNEGPTLKRFRPRAKGSASPINKRTSHITVVVSVK</sequence>
<evidence type="ECO:0000255" key="1">
    <source>
        <dbReference type="HAMAP-Rule" id="MF_01331"/>
    </source>
</evidence>
<evidence type="ECO:0000305" key="2"/>
<gene>
    <name evidence="1" type="primary">rplV</name>
    <name type="ordered locus">LSL_1430</name>
</gene>
<name>RL22_LIGS1</name>
<accession>Q1WS95</accession>
<organism>
    <name type="scientific">Ligilactobacillus salivarius (strain UCC118)</name>
    <name type="common">Lactobacillus salivarius</name>
    <dbReference type="NCBI Taxonomy" id="362948"/>
    <lineage>
        <taxon>Bacteria</taxon>
        <taxon>Bacillati</taxon>
        <taxon>Bacillota</taxon>
        <taxon>Bacilli</taxon>
        <taxon>Lactobacillales</taxon>
        <taxon>Lactobacillaceae</taxon>
        <taxon>Ligilactobacillus</taxon>
    </lineage>
</organism>
<protein>
    <recommendedName>
        <fullName evidence="1">Large ribosomal subunit protein uL22</fullName>
    </recommendedName>
    <alternativeName>
        <fullName evidence="2">50S ribosomal protein L22</fullName>
    </alternativeName>
</protein>
<dbReference type="EMBL" id="CP000233">
    <property type="protein sequence ID" value="ABE00234.1"/>
    <property type="molecule type" value="Genomic_DNA"/>
</dbReference>
<dbReference type="RefSeq" id="WP_003701308.1">
    <property type="nucleotide sequence ID" value="NC_007929.1"/>
</dbReference>
<dbReference type="RefSeq" id="YP_536317.1">
    <property type="nucleotide sequence ID" value="NC_007929.1"/>
</dbReference>
<dbReference type="SMR" id="Q1WS95"/>
<dbReference type="STRING" id="362948.LSL_1430"/>
<dbReference type="GeneID" id="89466165"/>
<dbReference type="KEGG" id="lsl:LSL_1430"/>
<dbReference type="PATRIC" id="fig|362948.14.peg.1513"/>
<dbReference type="HOGENOM" id="CLU_083987_3_3_9"/>
<dbReference type="OrthoDB" id="9805969at2"/>
<dbReference type="Proteomes" id="UP000006559">
    <property type="component" value="Chromosome"/>
</dbReference>
<dbReference type="GO" id="GO:0022625">
    <property type="term" value="C:cytosolic large ribosomal subunit"/>
    <property type="evidence" value="ECO:0007669"/>
    <property type="project" value="TreeGrafter"/>
</dbReference>
<dbReference type="GO" id="GO:0019843">
    <property type="term" value="F:rRNA binding"/>
    <property type="evidence" value="ECO:0007669"/>
    <property type="project" value="UniProtKB-UniRule"/>
</dbReference>
<dbReference type="GO" id="GO:0003735">
    <property type="term" value="F:structural constituent of ribosome"/>
    <property type="evidence" value="ECO:0007669"/>
    <property type="project" value="InterPro"/>
</dbReference>
<dbReference type="GO" id="GO:0006412">
    <property type="term" value="P:translation"/>
    <property type="evidence" value="ECO:0007669"/>
    <property type="project" value="UniProtKB-UniRule"/>
</dbReference>
<dbReference type="CDD" id="cd00336">
    <property type="entry name" value="Ribosomal_L22"/>
    <property type="match status" value="1"/>
</dbReference>
<dbReference type="FunFam" id="3.90.470.10:FF:000001">
    <property type="entry name" value="50S ribosomal protein L22"/>
    <property type="match status" value="1"/>
</dbReference>
<dbReference type="Gene3D" id="3.90.470.10">
    <property type="entry name" value="Ribosomal protein L22/L17"/>
    <property type="match status" value="1"/>
</dbReference>
<dbReference type="HAMAP" id="MF_01331_B">
    <property type="entry name" value="Ribosomal_uL22_B"/>
    <property type="match status" value="1"/>
</dbReference>
<dbReference type="InterPro" id="IPR001063">
    <property type="entry name" value="Ribosomal_uL22"/>
</dbReference>
<dbReference type="InterPro" id="IPR005727">
    <property type="entry name" value="Ribosomal_uL22_bac/chlpt-type"/>
</dbReference>
<dbReference type="InterPro" id="IPR047867">
    <property type="entry name" value="Ribosomal_uL22_bac/org-type"/>
</dbReference>
<dbReference type="InterPro" id="IPR018260">
    <property type="entry name" value="Ribosomal_uL22_CS"/>
</dbReference>
<dbReference type="InterPro" id="IPR036394">
    <property type="entry name" value="Ribosomal_uL22_sf"/>
</dbReference>
<dbReference type="NCBIfam" id="TIGR01044">
    <property type="entry name" value="rplV_bact"/>
    <property type="match status" value="1"/>
</dbReference>
<dbReference type="PANTHER" id="PTHR13501">
    <property type="entry name" value="CHLOROPLAST 50S RIBOSOMAL PROTEIN L22-RELATED"/>
    <property type="match status" value="1"/>
</dbReference>
<dbReference type="PANTHER" id="PTHR13501:SF8">
    <property type="entry name" value="LARGE RIBOSOMAL SUBUNIT PROTEIN UL22M"/>
    <property type="match status" value="1"/>
</dbReference>
<dbReference type="Pfam" id="PF00237">
    <property type="entry name" value="Ribosomal_L22"/>
    <property type="match status" value="1"/>
</dbReference>
<dbReference type="SUPFAM" id="SSF54843">
    <property type="entry name" value="Ribosomal protein L22"/>
    <property type="match status" value="1"/>
</dbReference>
<dbReference type="PROSITE" id="PS00464">
    <property type="entry name" value="RIBOSOMAL_L22"/>
    <property type="match status" value="1"/>
</dbReference>
<proteinExistence type="inferred from homology"/>
<keyword id="KW-1185">Reference proteome</keyword>
<keyword id="KW-0687">Ribonucleoprotein</keyword>
<keyword id="KW-0689">Ribosomal protein</keyword>
<keyword id="KW-0694">RNA-binding</keyword>
<keyword id="KW-0699">rRNA-binding</keyword>
<reference key="1">
    <citation type="journal article" date="2006" name="Proc. Natl. Acad. Sci. U.S.A.">
        <title>Multireplicon genome architecture of Lactobacillus salivarius.</title>
        <authorList>
            <person name="Claesson M.J."/>
            <person name="Li Y."/>
            <person name="Leahy S."/>
            <person name="Canchaya C."/>
            <person name="van Pijkeren J.P."/>
            <person name="Cerdeno-Tarraga A.M."/>
            <person name="Parkhill J."/>
            <person name="Flynn S."/>
            <person name="O'Sullivan G.C."/>
            <person name="Collins J.K."/>
            <person name="Higgins D."/>
            <person name="Shanahan F."/>
            <person name="Fitzgerald G.F."/>
            <person name="van Sinderen D."/>
            <person name="O'Toole P.W."/>
        </authorList>
    </citation>
    <scope>NUCLEOTIDE SEQUENCE [LARGE SCALE GENOMIC DNA]</scope>
    <source>
        <strain>UCC118</strain>
    </source>
</reference>
<feature type="chain" id="PRO_1000052595" description="Large ribosomal subunit protein uL22">
    <location>
        <begin position="1"/>
        <end position="115"/>
    </location>
</feature>